<name>1C04_GORGO</name>
<proteinExistence type="evidence at transcript level"/>
<reference key="1">
    <citation type="journal article" date="1991" name="J. Exp. Med.">
        <title>Gorilla class I major histocompatibility complex alleles: comparison to human and chimpanzee class I.</title>
        <authorList>
            <person name="Lawlor D.A."/>
            <person name="Warren E."/>
            <person name="Taylor P."/>
            <person name="Parham P."/>
        </authorList>
    </citation>
    <scope>NUCLEOTIDE SEQUENCE [MRNA]</scope>
</reference>
<feature type="signal peptide" evidence="1">
    <location>
        <begin position="1"/>
        <end position="24"/>
    </location>
</feature>
<feature type="chain" id="PRO_0000018908" description="Class I histocompatibility antigen, Gogo-C*0203 alpha chain">
    <location>
        <begin position="25"/>
        <end position="366"/>
    </location>
</feature>
<feature type="topological domain" description="Extracellular" evidence="2">
    <location>
        <begin position="25"/>
        <end position="308"/>
    </location>
</feature>
<feature type="transmembrane region" description="Helical" evidence="2">
    <location>
        <begin position="309"/>
        <end position="332"/>
    </location>
</feature>
<feature type="topological domain" description="Cytoplasmic" evidence="2">
    <location>
        <begin position="333"/>
        <end position="366"/>
    </location>
</feature>
<feature type="domain" description="Ig-like C1-type">
    <location>
        <begin position="209"/>
        <end position="297"/>
    </location>
</feature>
<feature type="region of interest" description="Alpha-1">
    <location>
        <begin position="25"/>
        <end position="114"/>
    </location>
</feature>
<feature type="region of interest" description="Alpha-2">
    <location>
        <begin position="115"/>
        <end position="206"/>
    </location>
</feature>
<feature type="region of interest" description="Alpha-3">
    <location>
        <begin position="207"/>
        <end position="298"/>
    </location>
</feature>
<feature type="region of interest" description="Connecting peptide">
    <location>
        <begin position="299"/>
        <end position="308"/>
    </location>
</feature>
<feature type="glycosylation site" description="N-linked (GlcNAc...) asparagine" evidence="1">
    <location>
        <position position="110"/>
    </location>
</feature>
<feature type="disulfide bond" evidence="3">
    <location>
        <begin position="125"/>
        <end position="188"/>
    </location>
</feature>
<feature type="disulfide bond" evidence="3">
    <location>
        <begin position="227"/>
        <end position="283"/>
    </location>
</feature>
<comment type="function">
    <text>Involved in the presentation of foreign antigens to the immune system.</text>
</comment>
<comment type="subunit">
    <text>Heterodimer of an alpha chain and a beta chain (beta-2-microglobulin).</text>
</comment>
<comment type="subcellular location">
    <subcellularLocation>
        <location>Membrane</location>
        <topology>Single-pass type I membrane protein</topology>
    </subcellularLocation>
</comment>
<comment type="similarity">
    <text evidence="4">Belongs to the MHC class I family.</text>
</comment>
<accession>P30387</accession>
<organism>
    <name type="scientific">Gorilla gorilla gorilla</name>
    <name type="common">Western lowland gorilla</name>
    <dbReference type="NCBI Taxonomy" id="9595"/>
    <lineage>
        <taxon>Eukaryota</taxon>
        <taxon>Metazoa</taxon>
        <taxon>Chordata</taxon>
        <taxon>Craniata</taxon>
        <taxon>Vertebrata</taxon>
        <taxon>Euteleostomi</taxon>
        <taxon>Mammalia</taxon>
        <taxon>Eutheria</taxon>
        <taxon>Euarchontoglires</taxon>
        <taxon>Primates</taxon>
        <taxon>Haplorrhini</taxon>
        <taxon>Catarrhini</taxon>
        <taxon>Hominidae</taxon>
        <taxon>Gorilla</taxon>
    </lineage>
</organism>
<keyword id="KW-1015">Disulfide bond</keyword>
<keyword id="KW-0325">Glycoprotein</keyword>
<keyword id="KW-0391">Immunity</keyword>
<keyword id="KW-0472">Membrane</keyword>
<keyword id="KW-0490">MHC I</keyword>
<keyword id="KW-1185">Reference proteome</keyword>
<keyword id="KW-0732">Signal</keyword>
<keyword id="KW-0812">Transmembrane</keyword>
<keyword id="KW-1133">Transmembrane helix</keyword>
<dbReference type="EMBL" id="X60248">
    <property type="protein sequence ID" value="CAA42800.1"/>
    <property type="molecule type" value="mRNA"/>
</dbReference>
<dbReference type="PIR" id="JH0547">
    <property type="entry name" value="JH0547"/>
</dbReference>
<dbReference type="SMR" id="P30387"/>
<dbReference type="FunCoup" id="P30387">
    <property type="interactions" value="1522"/>
</dbReference>
<dbReference type="InParanoid" id="P30387"/>
<dbReference type="Proteomes" id="UP000001519">
    <property type="component" value="Unplaced"/>
</dbReference>
<dbReference type="GO" id="GO:0031901">
    <property type="term" value="C:early endosome membrane"/>
    <property type="evidence" value="ECO:0007669"/>
    <property type="project" value="UniProtKB-ARBA"/>
</dbReference>
<dbReference type="GO" id="GO:0012507">
    <property type="term" value="C:ER to Golgi transport vesicle membrane"/>
    <property type="evidence" value="ECO:0007669"/>
    <property type="project" value="UniProtKB-ARBA"/>
</dbReference>
<dbReference type="GO" id="GO:0009897">
    <property type="term" value="C:external side of plasma membrane"/>
    <property type="evidence" value="ECO:0000318"/>
    <property type="project" value="GO_Central"/>
</dbReference>
<dbReference type="GO" id="GO:0005615">
    <property type="term" value="C:extracellular space"/>
    <property type="evidence" value="ECO:0000318"/>
    <property type="project" value="GO_Central"/>
</dbReference>
<dbReference type="GO" id="GO:0098553">
    <property type="term" value="C:lumenal side of endoplasmic reticulum membrane"/>
    <property type="evidence" value="ECO:0007669"/>
    <property type="project" value="UniProtKB-ARBA"/>
</dbReference>
<dbReference type="GO" id="GO:0042612">
    <property type="term" value="C:MHC class I protein complex"/>
    <property type="evidence" value="ECO:0007669"/>
    <property type="project" value="UniProtKB-KW"/>
</dbReference>
<dbReference type="GO" id="GO:0030670">
    <property type="term" value="C:phagocytic vesicle membrane"/>
    <property type="evidence" value="ECO:0007669"/>
    <property type="project" value="UniProtKB-ARBA"/>
</dbReference>
<dbReference type="GO" id="GO:0055038">
    <property type="term" value="C:recycling endosome membrane"/>
    <property type="evidence" value="ECO:0007669"/>
    <property type="project" value="UniProtKB-ARBA"/>
</dbReference>
<dbReference type="GO" id="GO:0042605">
    <property type="term" value="F:peptide antigen binding"/>
    <property type="evidence" value="ECO:0000318"/>
    <property type="project" value="GO_Central"/>
</dbReference>
<dbReference type="GO" id="GO:0005102">
    <property type="term" value="F:signaling receptor binding"/>
    <property type="evidence" value="ECO:0000318"/>
    <property type="project" value="GO_Central"/>
</dbReference>
<dbReference type="GO" id="GO:0002486">
    <property type="term" value="P:antigen processing and presentation of endogenous peptide antigen via MHC class I via ER pathway, TAP-independent"/>
    <property type="evidence" value="ECO:0000318"/>
    <property type="project" value="GO_Central"/>
</dbReference>
<dbReference type="GO" id="GO:0002476">
    <property type="term" value="P:antigen processing and presentation of endogenous peptide antigen via MHC class Ib"/>
    <property type="evidence" value="ECO:0000318"/>
    <property type="project" value="GO_Central"/>
</dbReference>
<dbReference type="GO" id="GO:0006955">
    <property type="term" value="P:immune response"/>
    <property type="evidence" value="ECO:0000318"/>
    <property type="project" value="GO_Central"/>
</dbReference>
<dbReference type="GO" id="GO:0001916">
    <property type="term" value="P:positive regulation of T cell mediated cytotoxicity"/>
    <property type="evidence" value="ECO:0000318"/>
    <property type="project" value="GO_Central"/>
</dbReference>
<dbReference type="FunFam" id="2.60.40.10:FF:000014">
    <property type="entry name" value="H-2 class I histocompatibility antigen, alpha chain"/>
    <property type="match status" value="1"/>
</dbReference>
<dbReference type="FunFam" id="3.30.500.10:FF:000001">
    <property type="entry name" value="H-2 class I histocompatibility antigen, alpha chain"/>
    <property type="match status" value="1"/>
</dbReference>
<dbReference type="Gene3D" id="2.60.40.10">
    <property type="entry name" value="Immunoglobulins"/>
    <property type="match status" value="1"/>
</dbReference>
<dbReference type="Gene3D" id="3.30.500.10">
    <property type="entry name" value="MHC class I-like antigen recognition-like"/>
    <property type="match status" value="1"/>
</dbReference>
<dbReference type="InterPro" id="IPR007110">
    <property type="entry name" value="Ig-like_dom"/>
</dbReference>
<dbReference type="InterPro" id="IPR036179">
    <property type="entry name" value="Ig-like_dom_sf"/>
</dbReference>
<dbReference type="InterPro" id="IPR013783">
    <property type="entry name" value="Ig-like_fold"/>
</dbReference>
<dbReference type="InterPro" id="IPR003597">
    <property type="entry name" value="Ig_C1-set"/>
</dbReference>
<dbReference type="InterPro" id="IPR050208">
    <property type="entry name" value="MHC_class-I_related"/>
</dbReference>
<dbReference type="InterPro" id="IPR011161">
    <property type="entry name" value="MHC_I-like_Ag-recog"/>
</dbReference>
<dbReference type="InterPro" id="IPR037055">
    <property type="entry name" value="MHC_I-like_Ag-recog_sf"/>
</dbReference>
<dbReference type="InterPro" id="IPR011162">
    <property type="entry name" value="MHC_I/II-like_Ag-recog"/>
</dbReference>
<dbReference type="InterPro" id="IPR001039">
    <property type="entry name" value="MHC_I_a_a1/a2"/>
</dbReference>
<dbReference type="InterPro" id="IPR010579">
    <property type="entry name" value="MHC_I_a_C"/>
</dbReference>
<dbReference type="PANTHER" id="PTHR16675:SF251">
    <property type="entry name" value="HLA CLASS I HISTOCOMPATIBILITY ANTIGEN, C ALPHA CHAIN"/>
    <property type="match status" value="1"/>
</dbReference>
<dbReference type="PANTHER" id="PTHR16675">
    <property type="entry name" value="MHC CLASS I-RELATED"/>
    <property type="match status" value="1"/>
</dbReference>
<dbReference type="Pfam" id="PF07654">
    <property type="entry name" value="C1-set"/>
    <property type="match status" value="1"/>
</dbReference>
<dbReference type="Pfam" id="PF00129">
    <property type="entry name" value="MHC_I"/>
    <property type="match status" value="1"/>
</dbReference>
<dbReference type="Pfam" id="PF06623">
    <property type="entry name" value="MHC_I_C"/>
    <property type="match status" value="1"/>
</dbReference>
<dbReference type="PRINTS" id="PR01638">
    <property type="entry name" value="MHCCLASSI"/>
</dbReference>
<dbReference type="SMART" id="SM00407">
    <property type="entry name" value="IGc1"/>
    <property type="match status" value="1"/>
</dbReference>
<dbReference type="SUPFAM" id="SSF48726">
    <property type="entry name" value="Immunoglobulin"/>
    <property type="match status" value="1"/>
</dbReference>
<dbReference type="SUPFAM" id="SSF54452">
    <property type="entry name" value="MHC antigen-recognition domain"/>
    <property type="match status" value="1"/>
</dbReference>
<dbReference type="PROSITE" id="PS50835">
    <property type="entry name" value="IG_LIKE"/>
    <property type="match status" value="1"/>
</dbReference>
<evidence type="ECO:0000250" key="1"/>
<evidence type="ECO:0000255" key="2"/>
<evidence type="ECO:0000255" key="3">
    <source>
        <dbReference type="PROSITE-ProRule" id="PRU00114"/>
    </source>
</evidence>
<evidence type="ECO:0000305" key="4"/>
<protein>
    <recommendedName>
        <fullName>Class I histocompatibility antigen, Gogo-C*0203 alpha chain</fullName>
    </recommendedName>
</protein>
<sequence length="366" mass="40970">MRVMAPRTLILLLSGALALTETWAGSHSMRYFYTSVSRPGRGEPRFISVGYVDDTQFVRFDSDAASPRGEPRAPWVEQEGPEYWDRETQKYKRQAQTDRVNLRKLRGYYNQSEDGSHTLQSMYGCDLGPDGRLLRGYSQFAYDGKDYIALNEDLRSWTAADTAAQVTQRKWEAARVAEQERAYLEGLCVEWLRRYLENGKETLQRAEPPKTHVTHHPLSDHEATLRCWALGFYPAEITLTWQRDGEDQTQDTELVETRPAGDGTFQKWAAVVVPSGQEQRYTCHMQHEGLPEPLTLRWEPSSQPTIPIVGIVVGLAVLVVLAVLGAVVTAMMCRRKSSGGKGGSCSQAACSNSAQGSDESLITCKA</sequence>